<gene>
    <name evidence="1" type="primary">sucC</name>
    <name type="ordered locus">AZOSEA06810</name>
    <name type="ORF">ebA1272</name>
</gene>
<protein>
    <recommendedName>
        <fullName evidence="1">Succinate--CoA ligase [ADP-forming] subunit beta</fullName>
        <ecNumber evidence="1">6.2.1.5</ecNumber>
    </recommendedName>
    <alternativeName>
        <fullName evidence="1">Succinyl-CoA synthetase subunit beta</fullName>
        <shortName evidence="1">SCS-beta</shortName>
    </alternativeName>
</protein>
<feature type="chain" id="PRO_1000082003" description="Succinate--CoA ligase [ADP-forming] subunit beta">
    <location>
        <begin position="1"/>
        <end position="386"/>
    </location>
</feature>
<feature type="domain" description="ATP-grasp" evidence="1">
    <location>
        <begin position="9"/>
        <end position="244"/>
    </location>
</feature>
<feature type="binding site" evidence="1">
    <location>
        <position position="46"/>
    </location>
    <ligand>
        <name>ATP</name>
        <dbReference type="ChEBI" id="CHEBI:30616"/>
    </ligand>
</feature>
<feature type="binding site" evidence="1">
    <location>
        <begin position="53"/>
        <end position="55"/>
    </location>
    <ligand>
        <name>ATP</name>
        <dbReference type="ChEBI" id="CHEBI:30616"/>
    </ligand>
</feature>
<feature type="binding site" evidence="1">
    <location>
        <position position="99"/>
    </location>
    <ligand>
        <name>ATP</name>
        <dbReference type="ChEBI" id="CHEBI:30616"/>
    </ligand>
</feature>
<feature type="binding site" evidence="1">
    <location>
        <position position="102"/>
    </location>
    <ligand>
        <name>ATP</name>
        <dbReference type="ChEBI" id="CHEBI:30616"/>
    </ligand>
</feature>
<feature type="binding site" evidence="1">
    <location>
        <position position="107"/>
    </location>
    <ligand>
        <name>ATP</name>
        <dbReference type="ChEBI" id="CHEBI:30616"/>
    </ligand>
</feature>
<feature type="binding site" evidence="1">
    <location>
        <position position="199"/>
    </location>
    <ligand>
        <name>Mg(2+)</name>
        <dbReference type="ChEBI" id="CHEBI:18420"/>
    </ligand>
</feature>
<feature type="binding site" evidence="1">
    <location>
        <position position="213"/>
    </location>
    <ligand>
        <name>Mg(2+)</name>
        <dbReference type="ChEBI" id="CHEBI:18420"/>
    </ligand>
</feature>
<feature type="binding site" evidence="1">
    <location>
        <position position="264"/>
    </location>
    <ligand>
        <name>substrate</name>
        <note>ligand shared with subunit alpha</note>
    </ligand>
</feature>
<feature type="binding site" evidence="1">
    <location>
        <begin position="321"/>
        <end position="323"/>
    </location>
    <ligand>
        <name>substrate</name>
        <note>ligand shared with subunit alpha</note>
    </ligand>
</feature>
<sequence length="386" mass="41194">MKIHEYQAKELLRKYGVVTPRGFHTVSVDGAVKAAEELGGKIWVVKAQIHAGGRGKGGGVKLARSLDEVRQHASDILGMQLVTHQTGPEGQKVRNLLIEEGADIQKEYYVAALTDRATQKVAIMASSEGGMDIEEVAHSTPEKILKEFVDPLVGLTDAQAENLARGIGVPEASVAKAVDALKRLYTCYMETDASLAEINPLILEGNGNIKALDAKFNFDSNALYRHPEIVDFRDFDEEDADEIEASKFDLAYISLDGNIGCLVNGAGLAMATMDTIKLFGAEPANFLDVGGGATTEKVTEAFKIMLKNPKVKGILVNIFGGIMKCDTIATGVVAAAKEVNLSVPLVVRMKGTNEDLGKKILAESGLPIIAADTMAEAATKIVAAVK</sequence>
<comment type="function">
    <text evidence="1">Succinyl-CoA synthetase functions in the citric acid cycle (TCA), coupling the hydrolysis of succinyl-CoA to the synthesis of either ATP or GTP and thus represents the only step of substrate-level phosphorylation in the TCA. The beta subunit provides nucleotide specificity of the enzyme and binds the substrate succinate, while the binding sites for coenzyme A and phosphate are found in the alpha subunit.</text>
</comment>
<comment type="catalytic activity">
    <reaction evidence="1">
        <text>succinate + ATP + CoA = succinyl-CoA + ADP + phosphate</text>
        <dbReference type="Rhea" id="RHEA:17661"/>
        <dbReference type="ChEBI" id="CHEBI:30031"/>
        <dbReference type="ChEBI" id="CHEBI:30616"/>
        <dbReference type="ChEBI" id="CHEBI:43474"/>
        <dbReference type="ChEBI" id="CHEBI:57287"/>
        <dbReference type="ChEBI" id="CHEBI:57292"/>
        <dbReference type="ChEBI" id="CHEBI:456216"/>
        <dbReference type="EC" id="6.2.1.5"/>
    </reaction>
    <physiologicalReaction direction="right-to-left" evidence="1">
        <dbReference type="Rhea" id="RHEA:17663"/>
    </physiologicalReaction>
</comment>
<comment type="catalytic activity">
    <reaction evidence="1">
        <text>GTP + succinate + CoA = succinyl-CoA + GDP + phosphate</text>
        <dbReference type="Rhea" id="RHEA:22120"/>
        <dbReference type="ChEBI" id="CHEBI:30031"/>
        <dbReference type="ChEBI" id="CHEBI:37565"/>
        <dbReference type="ChEBI" id="CHEBI:43474"/>
        <dbReference type="ChEBI" id="CHEBI:57287"/>
        <dbReference type="ChEBI" id="CHEBI:57292"/>
        <dbReference type="ChEBI" id="CHEBI:58189"/>
    </reaction>
    <physiologicalReaction direction="right-to-left" evidence="1">
        <dbReference type="Rhea" id="RHEA:22122"/>
    </physiologicalReaction>
</comment>
<comment type="cofactor">
    <cofactor evidence="1">
        <name>Mg(2+)</name>
        <dbReference type="ChEBI" id="CHEBI:18420"/>
    </cofactor>
    <text evidence="1">Binds 1 Mg(2+) ion per subunit.</text>
</comment>
<comment type="pathway">
    <text evidence="1">Carbohydrate metabolism; tricarboxylic acid cycle; succinate from succinyl-CoA (ligase route): step 1/1.</text>
</comment>
<comment type="subunit">
    <text evidence="1">Heterotetramer of two alpha and two beta subunits.</text>
</comment>
<comment type="similarity">
    <text evidence="1">Belongs to the succinate/malate CoA ligase beta subunit family.</text>
</comment>
<organism>
    <name type="scientific">Aromatoleum aromaticum (strain DSM 19018 / LMG 30748 / EbN1)</name>
    <name type="common">Azoarcus sp. (strain EbN1)</name>
    <dbReference type="NCBI Taxonomy" id="76114"/>
    <lineage>
        <taxon>Bacteria</taxon>
        <taxon>Pseudomonadati</taxon>
        <taxon>Pseudomonadota</taxon>
        <taxon>Betaproteobacteria</taxon>
        <taxon>Rhodocyclales</taxon>
        <taxon>Rhodocyclaceae</taxon>
        <taxon>Aromatoleum</taxon>
    </lineage>
</organism>
<reference key="1">
    <citation type="journal article" date="2005" name="Arch. Microbiol.">
        <title>The genome sequence of an anaerobic aromatic-degrading denitrifying bacterium, strain EbN1.</title>
        <authorList>
            <person name="Rabus R."/>
            <person name="Kube M."/>
            <person name="Heider J."/>
            <person name="Beck A."/>
            <person name="Heitmann K."/>
            <person name="Widdel F."/>
            <person name="Reinhardt R."/>
        </authorList>
    </citation>
    <scope>NUCLEOTIDE SEQUENCE [LARGE SCALE GENOMIC DNA]</scope>
    <source>
        <strain>DSM 19018 / LMG 30748 / EbN1</strain>
    </source>
</reference>
<keyword id="KW-0067">ATP-binding</keyword>
<keyword id="KW-0436">Ligase</keyword>
<keyword id="KW-0460">Magnesium</keyword>
<keyword id="KW-0479">Metal-binding</keyword>
<keyword id="KW-0547">Nucleotide-binding</keyword>
<keyword id="KW-1185">Reference proteome</keyword>
<keyword id="KW-0816">Tricarboxylic acid cycle</keyword>
<proteinExistence type="inferred from homology"/>
<name>SUCC_AROAE</name>
<accession>Q5P7A7</accession>
<dbReference type="EC" id="6.2.1.5" evidence="1"/>
<dbReference type="EMBL" id="CR555306">
    <property type="protein sequence ID" value="CAI06804.1"/>
    <property type="molecule type" value="Genomic_DNA"/>
</dbReference>
<dbReference type="RefSeq" id="WP_011236532.1">
    <property type="nucleotide sequence ID" value="NC_006513.1"/>
</dbReference>
<dbReference type="SMR" id="Q5P7A7"/>
<dbReference type="STRING" id="76114.ebA1272"/>
<dbReference type="KEGG" id="eba:ebA1272"/>
<dbReference type="eggNOG" id="COG0045">
    <property type="taxonomic scope" value="Bacteria"/>
</dbReference>
<dbReference type="HOGENOM" id="CLU_037430_0_2_4"/>
<dbReference type="OrthoDB" id="9802602at2"/>
<dbReference type="UniPathway" id="UPA00223">
    <property type="reaction ID" value="UER00999"/>
</dbReference>
<dbReference type="Proteomes" id="UP000006552">
    <property type="component" value="Chromosome"/>
</dbReference>
<dbReference type="GO" id="GO:0005829">
    <property type="term" value="C:cytosol"/>
    <property type="evidence" value="ECO:0007669"/>
    <property type="project" value="TreeGrafter"/>
</dbReference>
<dbReference type="GO" id="GO:0042709">
    <property type="term" value="C:succinate-CoA ligase complex"/>
    <property type="evidence" value="ECO:0007669"/>
    <property type="project" value="TreeGrafter"/>
</dbReference>
<dbReference type="GO" id="GO:0005524">
    <property type="term" value="F:ATP binding"/>
    <property type="evidence" value="ECO:0007669"/>
    <property type="project" value="UniProtKB-UniRule"/>
</dbReference>
<dbReference type="GO" id="GO:0000287">
    <property type="term" value="F:magnesium ion binding"/>
    <property type="evidence" value="ECO:0007669"/>
    <property type="project" value="UniProtKB-UniRule"/>
</dbReference>
<dbReference type="GO" id="GO:0004775">
    <property type="term" value="F:succinate-CoA ligase (ADP-forming) activity"/>
    <property type="evidence" value="ECO:0007669"/>
    <property type="project" value="UniProtKB-UniRule"/>
</dbReference>
<dbReference type="GO" id="GO:0004776">
    <property type="term" value="F:succinate-CoA ligase (GDP-forming) activity"/>
    <property type="evidence" value="ECO:0007669"/>
    <property type="project" value="RHEA"/>
</dbReference>
<dbReference type="GO" id="GO:0006104">
    <property type="term" value="P:succinyl-CoA metabolic process"/>
    <property type="evidence" value="ECO:0007669"/>
    <property type="project" value="TreeGrafter"/>
</dbReference>
<dbReference type="GO" id="GO:0006099">
    <property type="term" value="P:tricarboxylic acid cycle"/>
    <property type="evidence" value="ECO:0007669"/>
    <property type="project" value="UniProtKB-UniRule"/>
</dbReference>
<dbReference type="FunFam" id="3.30.1490.20:FF:000002">
    <property type="entry name" value="Succinate--CoA ligase [ADP-forming] subunit beta"/>
    <property type="match status" value="1"/>
</dbReference>
<dbReference type="FunFam" id="3.30.470.20:FF:000002">
    <property type="entry name" value="Succinate--CoA ligase [ADP-forming] subunit beta"/>
    <property type="match status" value="1"/>
</dbReference>
<dbReference type="FunFam" id="3.40.50.261:FF:000001">
    <property type="entry name" value="Succinate--CoA ligase [ADP-forming] subunit beta"/>
    <property type="match status" value="1"/>
</dbReference>
<dbReference type="Gene3D" id="3.30.1490.20">
    <property type="entry name" value="ATP-grasp fold, A domain"/>
    <property type="match status" value="1"/>
</dbReference>
<dbReference type="Gene3D" id="3.30.470.20">
    <property type="entry name" value="ATP-grasp fold, B domain"/>
    <property type="match status" value="1"/>
</dbReference>
<dbReference type="Gene3D" id="3.40.50.261">
    <property type="entry name" value="Succinyl-CoA synthetase domains"/>
    <property type="match status" value="1"/>
</dbReference>
<dbReference type="HAMAP" id="MF_00558">
    <property type="entry name" value="Succ_CoA_beta"/>
    <property type="match status" value="1"/>
</dbReference>
<dbReference type="InterPro" id="IPR011761">
    <property type="entry name" value="ATP-grasp"/>
</dbReference>
<dbReference type="InterPro" id="IPR013650">
    <property type="entry name" value="ATP-grasp_succ-CoA_synth-type"/>
</dbReference>
<dbReference type="InterPro" id="IPR013815">
    <property type="entry name" value="ATP_grasp_subdomain_1"/>
</dbReference>
<dbReference type="InterPro" id="IPR017866">
    <property type="entry name" value="Succ-CoA_synthase_bsu_CS"/>
</dbReference>
<dbReference type="InterPro" id="IPR005811">
    <property type="entry name" value="SUCC_ACL_C"/>
</dbReference>
<dbReference type="InterPro" id="IPR005809">
    <property type="entry name" value="Succ_CoA_ligase-like_bsu"/>
</dbReference>
<dbReference type="InterPro" id="IPR016102">
    <property type="entry name" value="Succinyl-CoA_synth-like"/>
</dbReference>
<dbReference type="NCBIfam" id="NF001913">
    <property type="entry name" value="PRK00696.1"/>
    <property type="match status" value="1"/>
</dbReference>
<dbReference type="NCBIfam" id="TIGR01016">
    <property type="entry name" value="sucCoAbeta"/>
    <property type="match status" value="1"/>
</dbReference>
<dbReference type="PANTHER" id="PTHR11815:SF10">
    <property type="entry name" value="SUCCINATE--COA LIGASE [GDP-FORMING] SUBUNIT BETA, MITOCHONDRIAL"/>
    <property type="match status" value="1"/>
</dbReference>
<dbReference type="PANTHER" id="PTHR11815">
    <property type="entry name" value="SUCCINYL-COA SYNTHETASE BETA CHAIN"/>
    <property type="match status" value="1"/>
</dbReference>
<dbReference type="Pfam" id="PF08442">
    <property type="entry name" value="ATP-grasp_2"/>
    <property type="match status" value="1"/>
</dbReference>
<dbReference type="Pfam" id="PF00549">
    <property type="entry name" value="Ligase_CoA"/>
    <property type="match status" value="1"/>
</dbReference>
<dbReference type="PIRSF" id="PIRSF001554">
    <property type="entry name" value="SucCS_beta"/>
    <property type="match status" value="1"/>
</dbReference>
<dbReference type="SUPFAM" id="SSF56059">
    <property type="entry name" value="Glutathione synthetase ATP-binding domain-like"/>
    <property type="match status" value="1"/>
</dbReference>
<dbReference type="SUPFAM" id="SSF52210">
    <property type="entry name" value="Succinyl-CoA synthetase domains"/>
    <property type="match status" value="1"/>
</dbReference>
<dbReference type="PROSITE" id="PS50975">
    <property type="entry name" value="ATP_GRASP"/>
    <property type="match status" value="1"/>
</dbReference>
<dbReference type="PROSITE" id="PS01217">
    <property type="entry name" value="SUCCINYL_COA_LIG_3"/>
    <property type="match status" value="1"/>
</dbReference>
<evidence type="ECO:0000255" key="1">
    <source>
        <dbReference type="HAMAP-Rule" id="MF_00558"/>
    </source>
</evidence>